<protein>
    <recommendedName>
        <fullName evidence="1">Probable nicotinate-nucleotide adenylyltransferase</fullName>
        <ecNumber evidence="1">2.7.7.18</ecNumber>
    </recommendedName>
    <alternativeName>
        <fullName evidence="1">Deamido-NAD(+) diphosphorylase</fullName>
    </alternativeName>
    <alternativeName>
        <fullName evidence="1">Deamido-NAD(+) pyrophosphorylase</fullName>
    </alternativeName>
    <alternativeName>
        <fullName evidence="1">Nicotinate mononucleotide adenylyltransferase</fullName>
        <shortName evidence="1">NaMN adenylyltransferase</shortName>
    </alternativeName>
</protein>
<keyword id="KW-0067">ATP-binding</keyword>
<keyword id="KW-0520">NAD</keyword>
<keyword id="KW-0547">Nucleotide-binding</keyword>
<keyword id="KW-0548">Nucleotidyltransferase</keyword>
<keyword id="KW-0662">Pyridine nucleotide biosynthesis</keyword>
<keyword id="KW-1185">Reference proteome</keyword>
<keyword id="KW-0808">Transferase</keyword>
<sequence length="201" mass="23946">MINKAILGGTFDPIHNAHINVAYEALERFNLEEVIFIPAGNPPHKIKLKKTPAHIRYEMVKLAIEKETRFSISDFEIKSKGLSYTYRTLKHFKEKEPETNWYFITGEDCLSYLEHWKYIDEIFNICNFVIFSREGFKEKEEIIKKKKSILLKYRKEILFMDASILDISSTKIRNRIKEGKEVSFYMPDKVYKFILQNNLYK</sequence>
<accession>A5I664</accession>
<accession>A7G7E7</accession>
<comment type="function">
    <text evidence="1">Catalyzes the reversible adenylation of nicotinate mononucleotide (NaMN) to nicotinic acid adenine dinucleotide (NaAD).</text>
</comment>
<comment type="catalytic activity">
    <reaction evidence="1">
        <text>nicotinate beta-D-ribonucleotide + ATP + H(+) = deamido-NAD(+) + diphosphate</text>
        <dbReference type="Rhea" id="RHEA:22860"/>
        <dbReference type="ChEBI" id="CHEBI:15378"/>
        <dbReference type="ChEBI" id="CHEBI:30616"/>
        <dbReference type="ChEBI" id="CHEBI:33019"/>
        <dbReference type="ChEBI" id="CHEBI:57502"/>
        <dbReference type="ChEBI" id="CHEBI:58437"/>
        <dbReference type="EC" id="2.7.7.18"/>
    </reaction>
</comment>
<comment type="pathway">
    <text evidence="1">Cofactor biosynthesis; NAD(+) biosynthesis; deamido-NAD(+) from nicotinate D-ribonucleotide: step 1/1.</text>
</comment>
<comment type="similarity">
    <text evidence="1">Belongs to the NadD family.</text>
</comment>
<proteinExistence type="inferred from homology"/>
<reference key="1">
    <citation type="journal article" date="2007" name="Genome Res.">
        <title>Genome sequence of a proteolytic (Group I) Clostridium botulinum strain Hall A and comparative analysis of the clostridial genomes.</title>
        <authorList>
            <person name="Sebaihia M."/>
            <person name="Peck M.W."/>
            <person name="Minton N.P."/>
            <person name="Thomson N.R."/>
            <person name="Holden M.T.G."/>
            <person name="Mitchell W.J."/>
            <person name="Carter A.T."/>
            <person name="Bentley S.D."/>
            <person name="Mason D.R."/>
            <person name="Crossman L."/>
            <person name="Paul C.J."/>
            <person name="Ivens A."/>
            <person name="Wells-Bennik M.H.J."/>
            <person name="Davis I.J."/>
            <person name="Cerdeno-Tarraga A.M."/>
            <person name="Churcher C."/>
            <person name="Quail M.A."/>
            <person name="Chillingworth T."/>
            <person name="Feltwell T."/>
            <person name="Fraser A."/>
            <person name="Goodhead I."/>
            <person name="Hance Z."/>
            <person name="Jagels K."/>
            <person name="Larke N."/>
            <person name="Maddison M."/>
            <person name="Moule S."/>
            <person name="Mungall K."/>
            <person name="Norbertczak H."/>
            <person name="Rabbinowitsch E."/>
            <person name="Sanders M."/>
            <person name="Simmonds M."/>
            <person name="White B."/>
            <person name="Whithead S."/>
            <person name="Parkhill J."/>
        </authorList>
    </citation>
    <scope>NUCLEOTIDE SEQUENCE [LARGE SCALE GENOMIC DNA]</scope>
    <source>
        <strain>Hall / ATCC 3502 / NCTC 13319 / Type A</strain>
    </source>
</reference>
<reference key="2">
    <citation type="journal article" date="2007" name="PLoS ONE">
        <title>Analysis of the neurotoxin complex genes in Clostridium botulinum A1-A4 and B1 strains: BoNT/A3, /Ba4 and /B1 clusters are located within plasmids.</title>
        <authorList>
            <person name="Smith T.J."/>
            <person name="Hill K.K."/>
            <person name="Foley B.T."/>
            <person name="Detter J.C."/>
            <person name="Munk A.C."/>
            <person name="Bruce D.C."/>
            <person name="Doggett N.A."/>
            <person name="Smith L.A."/>
            <person name="Marks J.D."/>
            <person name="Xie G."/>
            <person name="Brettin T.S."/>
        </authorList>
    </citation>
    <scope>NUCLEOTIDE SEQUENCE [LARGE SCALE GENOMIC DNA]</scope>
    <source>
        <strain>Hall / ATCC 3502 / NCTC 13319 / Type A</strain>
    </source>
</reference>
<organism>
    <name type="scientific">Clostridium botulinum (strain Hall / ATCC 3502 / NCTC 13319 / Type A)</name>
    <dbReference type="NCBI Taxonomy" id="441771"/>
    <lineage>
        <taxon>Bacteria</taxon>
        <taxon>Bacillati</taxon>
        <taxon>Bacillota</taxon>
        <taxon>Clostridia</taxon>
        <taxon>Eubacteriales</taxon>
        <taxon>Clostridiaceae</taxon>
        <taxon>Clostridium</taxon>
    </lineage>
</organism>
<gene>
    <name evidence="1" type="primary">nadD</name>
    <name type="ordered locus">CBO2984</name>
    <name type="ordered locus">CLC_2881</name>
</gene>
<feature type="chain" id="PRO_1000044685" description="Probable nicotinate-nucleotide adenylyltransferase">
    <location>
        <begin position="1"/>
        <end position="201"/>
    </location>
</feature>
<evidence type="ECO:0000255" key="1">
    <source>
        <dbReference type="HAMAP-Rule" id="MF_00244"/>
    </source>
</evidence>
<dbReference type="EC" id="2.7.7.18" evidence="1"/>
<dbReference type="EMBL" id="CP000727">
    <property type="protein sequence ID" value="ABS38070.1"/>
    <property type="molecule type" value="Genomic_DNA"/>
</dbReference>
<dbReference type="EMBL" id="AM412317">
    <property type="protein sequence ID" value="CAL84546.1"/>
    <property type="molecule type" value="Genomic_DNA"/>
</dbReference>
<dbReference type="RefSeq" id="WP_003360011.1">
    <property type="nucleotide sequence ID" value="NC_009698.1"/>
</dbReference>
<dbReference type="RefSeq" id="YP_001255476.1">
    <property type="nucleotide sequence ID" value="NC_009495.1"/>
</dbReference>
<dbReference type="RefSeq" id="YP_001388712.1">
    <property type="nucleotide sequence ID" value="NC_009698.1"/>
</dbReference>
<dbReference type="SMR" id="A5I664"/>
<dbReference type="GeneID" id="5187236"/>
<dbReference type="KEGG" id="cbh:CLC_2881"/>
<dbReference type="KEGG" id="cbo:CBO2984"/>
<dbReference type="PATRIC" id="fig|413999.7.peg.2962"/>
<dbReference type="HOGENOM" id="CLU_069765_3_2_9"/>
<dbReference type="UniPathway" id="UPA00253">
    <property type="reaction ID" value="UER00332"/>
</dbReference>
<dbReference type="PRO" id="PR:A5I664"/>
<dbReference type="Proteomes" id="UP000001986">
    <property type="component" value="Chromosome"/>
</dbReference>
<dbReference type="GO" id="GO:0005524">
    <property type="term" value="F:ATP binding"/>
    <property type="evidence" value="ECO:0007669"/>
    <property type="project" value="UniProtKB-KW"/>
</dbReference>
<dbReference type="GO" id="GO:0000309">
    <property type="term" value="F:nicotinamide-nucleotide adenylyltransferase activity"/>
    <property type="evidence" value="ECO:0000318"/>
    <property type="project" value="GO_Central"/>
</dbReference>
<dbReference type="GO" id="GO:0004515">
    <property type="term" value="F:nicotinate-nucleotide adenylyltransferase activity"/>
    <property type="evidence" value="ECO:0000318"/>
    <property type="project" value="GO_Central"/>
</dbReference>
<dbReference type="GO" id="GO:0009435">
    <property type="term" value="P:NAD biosynthetic process"/>
    <property type="evidence" value="ECO:0000318"/>
    <property type="project" value="GO_Central"/>
</dbReference>
<dbReference type="CDD" id="cd02165">
    <property type="entry name" value="NMNAT"/>
    <property type="match status" value="1"/>
</dbReference>
<dbReference type="FunFam" id="3.40.50.620:FF:000255">
    <property type="entry name" value="Probable nicotinate-nucleotide adenylyltransferase"/>
    <property type="match status" value="1"/>
</dbReference>
<dbReference type="Gene3D" id="3.40.50.620">
    <property type="entry name" value="HUPs"/>
    <property type="match status" value="1"/>
</dbReference>
<dbReference type="HAMAP" id="MF_00244">
    <property type="entry name" value="NaMN_adenylyltr"/>
    <property type="match status" value="1"/>
</dbReference>
<dbReference type="InterPro" id="IPR004821">
    <property type="entry name" value="Cyt_trans-like"/>
</dbReference>
<dbReference type="InterPro" id="IPR005248">
    <property type="entry name" value="NadD/NMNAT"/>
</dbReference>
<dbReference type="InterPro" id="IPR014729">
    <property type="entry name" value="Rossmann-like_a/b/a_fold"/>
</dbReference>
<dbReference type="NCBIfam" id="TIGR00125">
    <property type="entry name" value="cyt_tran_rel"/>
    <property type="match status" value="1"/>
</dbReference>
<dbReference type="NCBIfam" id="TIGR00482">
    <property type="entry name" value="nicotinate (nicotinamide) nucleotide adenylyltransferase"/>
    <property type="match status" value="1"/>
</dbReference>
<dbReference type="NCBIfam" id="NF000840">
    <property type="entry name" value="PRK00071.1-3"/>
    <property type="match status" value="1"/>
</dbReference>
<dbReference type="PANTHER" id="PTHR39321">
    <property type="entry name" value="NICOTINATE-NUCLEOTIDE ADENYLYLTRANSFERASE-RELATED"/>
    <property type="match status" value="1"/>
</dbReference>
<dbReference type="PANTHER" id="PTHR39321:SF3">
    <property type="entry name" value="PHOSPHOPANTETHEINE ADENYLYLTRANSFERASE"/>
    <property type="match status" value="1"/>
</dbReference>
<dbReference type="Pfam" id="PF01467">
    <property type="entry name" value="CTP_transf_like"/>
    <property type="match status" value="1"/>
</dbReference>
<dbReference type="SUPFAM" id="SSF52374">
    <property type="entry name" value="Nucleotidylyl transferase"/>
    <property type="match status" value="1"/>
</dbReference>
<name>NADD_CLOBH</name>